<keyword id="KW-0963">Cytoplasm</keyword>
<keyword id="KW-0489">Methyltransferase</keyword>
<keyword id="KW-1185">Reference proteome</keyword>
<keyword id="KW-0949">S-adenosyl-L-methionine</keyword>
<keyword id="KW-0808">Transferase</keyword>
<accession>A1ASL8</accession>
<sequence>MNFDRARKKMVQEQIATRGITDRRVLDAMLKTPRHIFVQEAMAAQAYSDSSLPVGEKQTISQPYTVALMTELLELTGREKVLEIGTGSGYQTAILAALADRVYTVERIRPLALRARKCLDSLRLFNVMLRINDSEGSPIGWDEEAPFDAIIVTAGAPAVPQVLTDQLAVDGRLVIPVGDEREQRLVKIVRKNDGTLETTTSIGCRFVPLIGRQGW</sequence>
<organism>
    <name type="scientific">Pelobacter propionicus (strain DSM 2379 / NBRC 103807 / OttBd1)</name>
    <dbReference type="NCBI Taxonomy" id="338966"/>
    <lineage>
        <taxon>Bacteria</taxon>
        <taxon>Pseudomonadati</taxon>
        <taxon>Thermodesulfobacteriota</taxon>
        <taxon>Desulfuromonadia</taxon>
        <taxon>Desulfuromonadales</taxon>
        <taxon>Desulfuromonadaceae</taxon>
        <taxon>Pelobacter</taxon>
    </lineage>
</organism>
<reference key="1">
    <citation type="submission" date="2006-10" db="EMBL/GenBank/DDBJ databases">
        <title>Complete sequence of chromosome of Pelobacter propionicus DSM 2379.</title>
        <authorList>
            <consortium name="US DOE Joint Genome Institute"/>
            <person name="Copeland A."/>
            <person name="Lucas S."/>
            <person name="Lapidus A."/>
            <person name="Barry K."/>
            <person name="Detter J.C."/>
            <person name="Glavina del Rio T."/>
            <person name="Hammon N."/>
            <person name="Israni S."/>
            <person name="Dalin E."/>
            <person name="Tice H."/>
            <person name="Pitluck S."/>
            <person name="Saunders E."/>
            <person name="Brettin T."/>
            <person name="Bruce D."/>
            <person name="Han C."/>
            <person name="Tapia R."/>
            <person name="Schmutz J."/>
            <person name="Larimer F."/>
            <person name="Land M."/>
            <person name="Hauser L."/>
            <person name="Kyrpides N."/>
            <person name="Kim E."/>
            <person name="Lovley D."/>
            <person name="Richardson P."/>
        </authorList>
    </citation>
    <scope>NUCLEOTIDE SEQUENCE [LARGE SCALE GENOMIC DNA]</scope>
    <source>
        <strain>DSM 2379 / NBRC 103807 / OttBd1</strain>
    </source>
</reference>
<evidence type="ECO:0000255" key="1">
    <source>
        <dbReference type="HAMAP-Rule" id="MF_00090"/>
    </source>
</evidence>
<protein>
    <recommendedName>
        <fullName evidence="1">Protein-L-isoaspartate O-methyltransferase 1</fullName>
        <ecNumber evidence="1">2.1.1.77</ecNumber>
    </recommendedName>
    <alternativeName>
        <fullName evidence="1">L-isoaspartyl protein carboxyl methyltransferase 1</fullName>
    </alternativeName>
    <alternativeName>
        <fullName evidence="1">Protein L-isoaspartyl methyltransferase 1</fullName>
    </alternativeName>
    <alternativeName>
        <fullName evidence="1">Protein-beta-aspartate methyltransferase 1</fullName>
        <shortName evidence="1">PIMT 1</shortName>
    </alternativeName>
</protein>
<comment type="function">
    <text evidence="1">Catalyzes the methyl esterification of L-isoaspartyl residues in peptides and proteins that result from spontaneous decomposition of normal L-aspartyl and L-asparaginyl residues. It plays a role in the repair and/or degradation of damaged proteins.</text>
</comment>
<comment type="catalytic activity">
    <reaction evidence="1">
        <text>[protein]-L-isoaspartate + S-adenosyl-L-methionine = [protein]-L-isoaspartate alpha-methyl ester + S-adenosyl-L-homocysteine</text>
        <dbReference type="Rhea" id="RHEA:12705"/>
        <dbReference type="Rhea" id="RHEA-COMP:12143"/>
        <dbReference type="Rhea" id="RHEA-COMP:12144"/>
        <dbReference type="ChEBI" id="CHEBI:57856"/>
        <dbReference type="ChEBI" id="CHEBI:59789"/>
        <dbReference type="ChEBI" id="CHEBI:90596"/>
        <dbReference type="ChEBI" id="CHEBI:90598"/>
        <dbReference type="EC" id="2.1.1.77"/>
    </reaction>
</comment>
<comment type="subcellular location">
    <subcellularLocation>
        <location evidence="1">Cytoplasm</location>
    </subcellularLocation>
</comment>
<comment type="similarity">
    <text evidence="1">Belongs to the methyltransferase superfamily. L-isoaspartyl/D-aspartyl protein methyltransferase family.</text>
</comment>
<dbReference type="EC" id="2.1.1.77" evidence="1"/>
<dbReference type="EMBL" id="CP000482">
    <property type="protein sequence ID" value="ABL00339.1"/>
    <property type="molecule type" value="Genomic_DNA"/>
</dbReference>
<dbReference type="RefSeq" id="WP_011736589.1">
    <property type="nucleotide sequence ID" value="NC_008609.1"/>
</dbReference>
<dbReference type="SMR" id="A1ASL8"/>
<dbReference type="STRING" id="338966.Ppro_2738"/>
<dbReference type="KEGG" id="ppd:Ppro_2738"/>
<dbReference type="eggNOG" id="COG2518">
    <property type="taxonomic scope" value="Bacteria"/>
</dbReference>
<dbReference type="HOGENOM" id="CLU_055432_2_0_7"/>
<dbReference type="OrthoDB" id="9810066at2"/>
<dbReference type="Proteomes" id="UP000006732">
    <property type="component" value="Chromosome"/>
</dbReference>
<dbReference type="GO" id="GO:0005737">
    <property type="term" value="C:cytoplasm"/>
    <property type="evidence" value="ECO:0007669"/>
    <property type="project" value="UniProtKB-SubCell"/>
</dbReference>
<dbReference type="GO" id="GO:0004719">
    <property type="term" value="F:protein-L-isoaspartate (D-aspartate) O-methyltransferase activity"/>
    <property type="evidence" value="ECO:0007669"/>
    <property type="project" value="UniProtKB-UniRule"/>
</dbReference>
<dbReference type="GO" id="GO:0032259">
    <property type="term" value="P:methylation"/>
    <property type="evidence" value="ECO:0007669"/>
    <property type="project" value="UniProtKB-KW"/>
</dbReference>
<dbReference type="GO" id="GO:0036211">
    <property type="term" value="P:protein modification process"/>
    <property type="evidence" value="ECO:0007669"/>
    <property type="project" value="UniProtKB-UniRule"/>
</dbReference>
<dbReference type="GO" id="GO:0030091">
    <property type="term" value="P:protein repair"/>
    <property type="evidence" value="ECO:0007669"/>
    <property type="project" value="UniProtKB-UniRule"/>
</dbReference>
<dbReference type="CDD" id="cd02440">
    <property type="entry name" value="AdoMet_MTases"/>
    <property type="match status" value="1"/>
</dbReference>
<dbReference type="FunFam" id="3.40.50.150:FF:000010">
    <property type="entry name" value="Protein-L-isoaspartate O-methyltransferase"/>
    <property type="match status" value="1"/>
</dbReference>
<dbReference type="Gene3D" id="3.40.50.150">
    <property type="entry name" value="Vaccinia Virus protein VP39"/>
    <property type="match status" value="1"/>
</dbReference>
<dbReference type="HAMAP" id="MF_00090">
    <property type="entry name" value="PIMT"/>
    <property type="match status" value="1"/>
</dbReference>
<dbReference type="InterPro" id="IPR000682">
    <property type="entry name" value="PCMT"/>
</dbReference>
<dbReference type="InterPro" id="IPR029063">
    <property type="entry name" value="SAM-dependent_MTases_sf"/>
</dbReference>
<dbReference type="NCBIfam" id="TIGR00080">
    <property type="entry name" value="pimt"/>
    <property type="match status" value="1"/>
</dbReference>
<dbReference type="NCBIfam" id="NF001453">
    <property type="entry name" value="PRK00312.1"/>
    <property type="match status" value="1"/>
</dbReference>
<dbReference type="PANTHER" id="PTHR11579">
    <property type="entry name" value="PROTEIN-L-ISOASPARTATE O-METHYLTRANSFERASE"/>
    <property type="match status" value="1"/>
</dbReference>
<dbReference type="PANTHER" id="PTHR11579:SF0">
    <property type="entry name" value="PROTEIN-L-ISOASPARTATE(D-ASPARTATE) O-METHYLTRANSFERASE"/>
    <property type="match status" value="1"/>
</dbReference>
<dbReference type="Pfam" id="PF01135">
    <property type="entry name" value="PCMT"/>
    <property type="match status" value="1"/>
</dbReference>
<dbReference type="SUPFAM" id="SSF53335">
    <property type="entry name" value="S-adenosyl-L-methionine-dependent methyltransferases"/>
    <property type="match status" value="1"/>
</dbReference>
<name>PIMT1_PELPD</name>
<proteinExistence type="inferred from homology"/>
<feature type="chain" id="PRO_0000351896" description="Protein-L-isoaspartate O-methyltransferase 1">
    <location>
        <begin position="1"/>
        <end position="215"/>
    </location>
</feature>
<feature type="active site" evidence="1">
    <location>
        <position position="61"/>
    </location>
</feature>
<gene>
    <name evidence="1" type="primary">pcm1</name>
    <name type="ordered locus">Ppro_2738</name>
</gene>